<reference key="1">
    <citation type="journal article" date="2007" name="Genes Dev.">
        <title>New insights into Acinetobacter baumannii pathogenesis revealed by high-density pyrosequencing and transposon mutagenesis.</title>
        <authorList>
            <person name="Smith M.G."/>
            <person name="Gianoulis T.A."/>
            <person name="Pukatzki S."/>
            <person name="Mekalanos J.J."/>
            <person name="Ornston L.N."/>
            <person name="Gerstein M."/>
            <person name="Snyder M."/>
        </authorList>
    </citation>
    <scope>NUCLEOTIDE SEQUENCE [LARGE SCALE GENOMIC DNA]</scope>
    <source>
        <strain>ATCC 17978 / DSM 105126 / CIP 53.77 / LMG 1025 / NCDC KC755 / 5377</strain>
    </source>
</reference>
<comment type="function">
    <text evidence="1">Part of the Sec protein translocase complex. Interacts with the SecYEG preprotein conducting channel. Has a central role in coupling the hydrolysis of ATP to the transfer of proteins into and across the cell membrane, serving both as a receptor for the preprotein-SecB complex and as an ATP-driven molecular motor driving the stepwise translocation of polypeptide chains across the membrane.</text>
</comment>
<comment type="catalytic activity">
    <reaction evidence="1">
        <text>ATP + H2O + cellular proteinSide 1 = ADP + phosphate + cellular proteinSide 2.</text>
        <dbReference type="EC" id="7.4.2.8"/>
    </reaction>
</comment>
<comment type="cofactor">
    <cofactor evidence="1">
        <name>Zn(2+)</name>
        <dbReference type="ChEBI" id="CHEBI:29105"/>
    </cofactor>
    <text evidence="1">May bind 1 zinc ion per subunit.</text>
</comment>
<comment type="subunit">
    <text evidence="1">Monomer and homodimer. Part of the essential Sec protein translocation apparatus which comprises SecA, SecYEG and auxiliary proteins SecDF-YajC and YidC.</text>
</comment>
<comment type="subcellular location">
    <subcellularLocation>
        <location evidence="1">Cell inner membrane</location>
        <topology evidence="1">Peripheral membrane protein</topology>
        <orientation evidence="1">Cytoplasmic side</orientation>
    </subcellularLocation>
    <subcellularLocation>
        <location evidence="1">Cytoplasm</location>
    </subcellularLocation>
    <text evidence="1">Distribution is 50-50.</text>
</comment>
<comment type="similarity">
    <text evidence="1">Belongs to the SecA family.</text>
</comment>
<protein>
    <recommendedName>
        <fullName evidence="1">Protein translocase subunit SecA</fullName>
        <ecNumber evidence="1">7.4.2.8</ecNumber>
    </recommendedName>
</protein>
<proteinExistence type="inferred from homology"/>
<organism>
    <name type="scientific">Acinetobacter baumannii (strain ATCC 17978 / DSM 105126 / CIP 53.77 / LMG 1025 / NCDC KC755 / 5377)</name>
    <dbReference type="NCBI Taxonomy" id="400667"/>
    <lineage>
        <taxon>Bacteria</taxon>
        <taxon>Pseudomonadati</taxon>
        <taxon>Pseudomonadota</taxon>
        <taxon>Gammaproteobacteria</taxon>
        <taxon>Moraxellales</taxon>
        <taxon>Moraxellaceae</taxon>
        <taxon>Acinetobacter</taxon>
        <taxon>Acinetobacter calcoaceticus/baumannii complex</taxon>
    </lineage>
</organism>
<gene>
    <name evidence="1" type="primary">secA</name>
    <name type="ordered locus">A1S_2862</name>
</gene>
<name>SECA_ACIBT</name>
<feature type="chain" id="PRO_0000320711" description="Protein translocase subunit SecA">
    <location>
        <begin position="1"/>
        <end position="907"/>
    </location>
</feature>
<feature type="binding site" evidence="1">
    <location>
        <position position="87"/>
    </location>
    <ligand>
        <name>ATP</name>
        <dbReference type="ChEBI" id="CHEBI:30616"/>
    </ligand>
</feature>
<feature type="binding site" evidence="1">
    <location>
        <begin position="105"/>
        <end position="109"/>
    </location>
    <ligand>
        <name>ATP</name>
        <dbReference type="ChEBI" id="CHEBI:30616"/>
    </ligand>
</feature>
<feature type="binding site" evidence="1">
    <location>
        <position position="510"/>
    </location>
    <ligand>
        <name>ATP</name>
        <dbReference type="ChEBI" id="CHEBI:30616"/>
    </ligand>
</feature>
<feature type="binding site" evidence="1">
    <location>
        <position position="892"/>
    </location>
    <ligand>
        <name>Zn(2+)</name>
        <dbReference type="ChEBI" id="CHEBI:29105"/>
    </ligand>
</feature>
<feature type="binding site" evidence="1">
    <location>
        <position position="894"/>
    </location>
    <ligand>
        <name>Zn(2+)</name>
        <dbReference type="ChEBI" id="CHEBI:29105"/>
    </ligand>
</feature>
<feature type="binding site" evidence="1">
    <location>
        <position position="903"/>
    </location>
    <ligand>
        <name>Zn(2+)</name>
        <dbReference type="ChEBI" id="CHEBI:29105"/>
    </ligand>
</feature>
<feature type="binding site" evidence="1">
    <location>
        <position position="904"/>
    </location>
    <ligand>
        <name>Zn(2+)</name>
        <dbReference type="ChEBI" id="CHEBI:29105"/>
    </ligand>
</feature>
<sequence>MLASLIGGIFGTKNERELKRMRKIVEQINALEPTISALSDADLSAKTPEFKQRYNNGESLDKLLPEAFAVCREAAKRVMGMRHYDVQLIGGITLHEGKIAEMRTGEGKTLMGTLACYLNALSGEGVHVITVNDYLAQRDAELNRPLFEFLGLSIGTIYSMQEPAEKAAAYLADITYGTNNEFGFDYLRDNMVFSLAEKKQRGLHYAIIDEVDSILIDEARTPLIISGQSEDSSHLYTAINTIPPKLRPQKEEKVADGGHFWIDEKQRSVEMTEIGYETVEQELIQMGLLAEGESLYSATNLNLVHHVSAAIRAHFLFQRDVHYIIHDGEVIIVDEHTGRTMPGRRWSEGLHQAVEAKEGLTIQPENQTLATTTFQNYFRLYKKLSGMTGTADTEAAEMKEIYGLDVVIIPTHRPMIRNDQNDLIYLNRNGKYNAIIQEIMNIRQQGVAPILIGTATIEASEILSSKLKQAGIHHEVLNAKQHEREADIIAQAGSPNAVTIATNMAGRGTDIILGGNWKAKLAKLENPTPEDEARLKAQWEQDHEDVLQAGGLHIIGSERHESRRIDNQLRGRAGRQGDPGVSRFYLSLEDDLMRIFAGDRVVAMMRAMGLKEDEAIEHKMVSRSIENAQRKVEARNFDIRKNLLKYDDVNNEQRKIIYSQRDEILAENTLQEYVEEMHREVMQAMIANFIPPESIHDQWDVEGLENALRIDLGIELPVQEWLEQDRRLDEEGLVERISDEVIARYRQRRAQMGDESAAMLERHFVLNSLDRHWKDHLAAMDYLRQGIHLRGYAQKNPEQEYKKEAFNLFVNMLGVIKTDVVTDLSRVHIPTPEELAEMEAQQQQQAEAMKLSFEHDDVDGLTGEVTASQEALNESATEQQTFPVPESRNAPCPCGSGLKYKQCHGKI</sequence>
<evidence type="ECO:0000255" key="1">
    <source>
        <dbReference type="HAMAP-Rule" id="MF_01382"/>
    </source>
</evidence>
<dbReference type="EC" id="7.4.2.8" evidence="1"/>
<dbReference type="EMBL" id="CP000521">
    <property type="protein sequence ID" value="ABO13268.2"/>
    <property type="molecule type" value="Genomic_DNA"/>
</dbReference>
<dbReference type="RefSeq" id="WP_000881347.1">
    <property type="nucleotide sequence ID" value="NZ_CP053098.1"/>
</dbReference>
<dbReference type="SMR" id="A3M8M4"/>
<dbReference type="KEGG" id="acb:A1S_2862"/>
<dbReference type="HOGENOM" id="CLU_005314_3_0_6"/>
<dbReference type="GO" id="GO:0031522">
    <property type="term" value="C:cell envelope Sec protein transport complex"/>
    <property type="evidence" value="ECO:0007669"/>
    <property type="project" value="TreeGrafter"/>
</dbReference>
<dbReference type="GO" id="GO:0005829">
    <property type="term" value="C:cytosol"/>
    <property type="evidence" value="ECO:0007669"/>
    <property type="project" value="TreeGrafter"/>
</dbReference>
<dbReference type="GO" id="GO:0005886">
    <property type="term" value="C:plasma membrane"/>
    <property type="evidence" value="ECO:0007669"/>
    <property type="project" value="UniProtKB-SubCell"/>
</dbReference>
<dbReference type="GO" id="GO:0005524">
    <property type="term" value="F:ATP binding"/>
    <property type="evidence" value="ECO:0007669"/>
    <property type="project" value="UniProtKB-UniRule"/>
</dbReference>
<dbReference type="GO" id="GO:0046872">
    <property type="term" value="F:metal ion binding"/>
    <property type="evidence" value="ECO:0007669"/>
    <property type="project" value="UniProtKB-KW"/>
</dbReference>
<dbReference type="GO" id="GO:0008564">
    <property type="term" value="F:protein-exporting ATPase activity"/>
    <property type="evidence" value="ECO:0007669"/>
    <property type="project" value="UniProtKB-EC"/>
</dbReference>
<dbReference type="GO" id="GO:0065002">
    <property type="term" value="P:intracellular protein transmembrane transport"/>
    <property type="evidence" value="ECO:0007669"/>
    <property type="project" value="UniProtKB-UniRule"/>
</dbReference>
<dbReference type="GO" id="GO:0017038">
    <property type="term" value="P:protein import"/>
    <property type="evidence" value="ECO:0007669"/>
    <property type="project" value="InterPro"/>
</dbReference>
<dbReference type="GO" id="GO:0006605">
    <property type="term" value="P:protein targeting"/>
    <property type="evidence" value="ECO:0007669"/>
    <property type="project" value="UniProtKB-UniRule"/>
</dbReference>
<dbReference type="GO" id="GO:0043952">
    <property type="term" value="P:protein transport by the Sec complex"/>
    <property type="evidence" value="ECO:0007669"/>
    <property type="project" value="TreeGrafter"/>
</dbReference>
<dbReference type="CDD" id="cd17928">
    <property type="entry name" value="DEXDc_SecA"/>
    <property type="match status" value="1"/>
</dbReference>
<dbReference type="CDD" id="cd18803">
    <property type="entry name" value="SF2_C_secA"/>
    <property type="match status" value="1"/>
</dbReference>
<dbReference type="FunFam" id="3.40.50.300:FF:000113">
    <property type="entry name" value="Preprotein translocase subunit SecA"/>
    <property type="match status" value="1"/>
</dbReference>
<dbReference type="FunFam" id="3.90.1440.10:FF:000001">
    <property type="entry name" value="Preprotein translocase subunit SecA"/>
    <property type="match status" value="1"/>
</dbReference>
<dbReference type="FunFam" id="1.10.3060.10:FF:000003">
    <property type="entry name" value="Protein translocase subunit SecA"/>
    <property type="match status" value="1"/>
</dbReference>
<dbReference type="Gene3D" id="1.10.3060.10">
    <property type="entry name" value="Helical scaffold and wing domains of SecA"/>
    <property type="match status" value="1"/>
</dbReference>
<dbReference type="Gene3D" id="3.40.50.300">
    <property type="entry name" value="P-loop containing nucleotide triphosphate hydrolases"/>
    <property type="match status" value="2"/>
</dbReference>
<dbReference type="Gene3D" id="3.90.1440.10">
    <property type="entry name" value="SecA, preprotein cross-linking domain"/>
    <property type="match status" value="1"/>
</dbReference>
<dbReference type="HAMAP" id="MF_01382">
    <property type="entry name" value="SecA"/>
    <property type="match status" value="1"/>
</dbReference>
<dbReference type="InterPro" id="IPR014001">
    <property type="entry name" value="Helicase_ATP-bd"/>
</dbReference>
<dbReference type="InterPro" id="IPR001650">
    <property type="entry name" value="Helicase_C-like"/>
</dbReference>
<dbReference type="InterPro" id="IPR027417">
    <property type="entry name" value="P-loop_NTPase"/>
</dbReference>
<dbReference type="InterPro" id="IPR004027">
    <property type="entry name" value="SEC_C_motif"/>
</dbReference>
<dbReference type="InterPro" id="IPR000185">
    <property type="entry name" value="SecA"/>
</dbReference>
<dbReference type="InterPro" id="IPR020937">
    <property type="entry name" value="SecA_CS"/>
</dbReference>
<dbReference type="InterPro" id="IPR011115">
    <property type="entry name" value="SecA_DEAD"/>
</dbReference>
<dbReference type="InterPro" id="IPR014018">
    <property type="entry name" value="SecA_motor_DEAD"/>
</dbReference>
<dbReference type="InterPro" id="IPR011130">
    <property type="entry name" value="SecA_preprotein_X-link_dom"/>
</dbReference>
<dbReference type="InterPro" id="IPR044722">
    <property type="entry name" value="SecA_SF2_C"/>
</dbReference>
<dbReference type="InterPro" id="IPR011116">
    <property type="entry name" value="SecA_Wing/Scaffold"/>
</dbReference>
<dbReference type="InterPro" id="IPR036266">
    <property type="entry name" value="SecA_Wing/Scaffold_sf"/>
</dbReference>
<dbReference type="InterPro" id="IPR036670">
    <property type="entry name" value="SecA_X-link_sf"/>
</dbReference>
<dbReference type="NCBIfam" id="NF009538">
    <property type="entry name" value="PRK12904.1"/>
    <property type="match status" value="1"/>
</dbReference>
<dbReference type="NCBIfam" id="TIGR00963">
    <property type="entry name" value="secA"/>
    <property type="match status" value="1"/>
</dbReference>
<dbReference type="PANTHER" id="PTHR30612:SF0">
    <property type="entry name" value="CHLOROPLAST PROTEIN-TRANSPORTING ATPASE"/>
    <property type="match status" value="1"/>
</dbReference>
<dbReference type="PANTHER" id="PTHR30612">
    <property type="entry name" value="SECA INNER MEMBRANE COMPONENT OF SEC PROTEIN SECRETION SYSTEM"/>
    <property type="match status" value="1"/>
</dbReference>
<dbReference type="Pfam" id="PF21090">
    <property type="entry name" value="P-loop_SecA"/>
    <property type="match status" value="1"/>
</dbReference>
<dbReference type="Pfam" id="PF02810">
    <property type="entry name" value="SEC-C"/>
    <property type="match status" value="1"/>
</dbReference>
<dbReference type="Pfam" id="PF07517">
    <property type="entry name" value="SecA_DEAD"/>
    <property type="match status" value="1"/>
</dbReference>
<dbReference type="Pfam" id="PF01043">
    <property type="entry name" value="SecA_PP_bind"/>
    <property type="match status" value="1"/>
</dbReference>
<dbReference type="Pfam" id="PF07516">
    <property type="entry name" value="SecA_SW"/>
    <property type="match status" value="1"/>
</dbReference>
<dbReference type="PRINTS" id="PR00906">
    <property type="entry name" value="SECA"/>
</dbReference>
<dbReference type="SMART" id="SM00957">
    <property type="entry name" value="SecA_DEAD"/>
    <property type="match status" value="1"/>
</dbReference>
<dbReference type="SMART" id="SM00958">
    <property type="entry name" value="SecA_PP_bind"/>
    <property type="match status" value="1"/>
</dbReference>
<dbReference type="SUPFAM" id="SSF81886">
    <property type="entry name" value="Helical scaffold and wing domains of SecA"/>
    <property type="match status" value="1"/>
</dbReference>
<dbReference type="SUPFAM" id="SSF52540">
    <property type="entry name" value="P-loop containing nucleoside triphosphate hydrolases"/>
    <property type="match status" value="2"/>
</dbReference>
<dbReference type="SUPFAM" id="SSF81767">
    <property type="entry name" value="Pre-protein crosslinking domain of SecA"/>
    <property type="match status" value="1"/>
</dbReference>
<dbReference type="PROSITE" id="PS01312">
    <property type="entry name" value="SECA"/>
    <property type="match status" value="1"/>
</dbReference>
<dbReference type="PROSITE" id="PS51196">
    <property type="entry name" value="SECA_MOTOR_DEAD"/>
    <property type="match status" value="1"/>
</dbReference>
<accession>A3M8M4</accession>
<keyword id="KW-0067">ATP-binding</keyword>
<keyword id="KW-0997">Cell inner membrane</keyword>
<keyword id="KW-1003">Cell membrane</keyword>
<keyword id="KW-0963">Cytoplasm</keyword>
<keyword id="KW-0472">Membrane</keyword>
<keyword id="KW-0479">Metal-binding</keyword>
<keyword id="KW-0547">Nucleotide-binding</keyword>
<keyword id="KW-0653">Protein transport</keyword>
<keyword id="KW-1278">Translocase</keyword>
<keyword id="KW-0811">Translocation</keyword>
<keyword id="KW-0813">Transport</keyword>
<keyword id="KW-0862">Zinc</keyword>